<evidence type="ECO:0000255" key="1">
    <source>
        <dbReference type="HAMAP-Rule" id="MF_00267"/>
    </source>
</evidence>
<feature type="chain" id="PRO_1000191232" description="Probable septum site-determining protein MinC">
    <location>
        <begin position="1"/>
        <end position="228"/>
    </location>
</feature>
<protein>
    <recommendedName>
        <fullName evidence="1">Probable septum site-determining protein MinC</fullName>
    </recommendedName>
</protein>
<dbReference type="EMBL" id="CP001283">
    <property type="protein sequence ID" value="ACK92586.1"/>
    <property type="molecule type" value="Genomic_DNA"/>
</dbReference>
<dbReference type="RefSeq" id="WP_000391517.1">
    <property type="nucleotide sequence ID" value="NC_011773.1"/>
</dbReference>
<dbReference type="SMR" id="B7JQ35"/>
<dbReference type="GeneID" id="93006651"/>
<dbReference type="KEGG" id="bcu:BCAH820_4529"/>
<dbReference type="HOGENOM" id="CLU_048711_1_1_9"/>
<dbReference type="Proteomes" id="UP000001363">
    <property type="component" value="Chromosome"/>
</dbReference>
<dbReference type="GO" id="GO:0000902">
    <property type="term" value="P:cell morphogenesis"/>
    <property type="evidence" value="ECO:0007669"/>
    <property type="project" value="InterPro"/>
</dbReference>
<dbReference type="GO" id="GO:0000917">
    <property type="term" value="P:division septum assembly"/>
    <property type="evidence" value="ECO:0007669"/>
    <property type="project" value="UniProtKB-KW"/>
</dbReference>
<dbReference type="GO" id="GO:1901891">
    <property type="term" value="P:regulation of cell septum assembly"/>
    <property type="evidence" value="ECO:0007669"/>
    <property type="project" value="InterPro"/>
</dbReference>
<dbReference type="FunFam" id="2.160.20.70:FF:000003">
    <property type="entry name" value="Probable septum site-determining protein MinC"/>
    <property type="match status" value="1"/>
</dbReference>
<dbReference type="FunFam" id="3.30.160.540:FF:000001">
    <property type="entry name" value="Probable septum site-determining protein MinC"/>
    <property type="match status" value="1"/>
</dbReference>
<dbReference type="Gene3D" id="2.160.20.70">
    <property type="match status" value="1"/>
</dbReference>
<dbReference type="Gene3D" id="3.30.160.540">
    <property type="match status" value="1"/>
</dbReference>
<dbReference type="HAMAP" id="MF_00267">
    <property type="entry name" value="MinC"/>
    <property type="match status" value="1"/>
</dbReference>
<dbReference type="InterPro" id="IPR016098">
    <property type="entry name" value="CAP/MinC_C"/>
</dbReference>
<dbReference type="InterPro" id="IPR013033">
    <property type="entry name" value="MinC"/>
</dbReference>
<dbReference type="InterPro" id="IPR036145">
    <property type="entry name" value="MinC_C_sf"/>
</dbReference>
<dbReference type="InterPro" id="IPR055219">
    <property type="entry name" value="MinC_N_1"/>
</dbReference>
<dbReference type="InterPro" id="IPR005526">
    <property type="entry name" value="Septum_form_inhib_MinC_C"/>
</dbReference>
<dbReference type="NCBIfam" id="TIGR01222">
    <property type="entry name" value="minC"/>
    <property type="match status" value="1"/>
</dbReference>
<dbReference type="PANTHER" id="PTHR34108">
    <property type="entry name" value="SEPTUM SITE-DETERMINING PROTEIN MINC"/>
    <property type="match status" value="1"/>
</dbReference>
<dbReference type="PANTHER" id="PTHR34108:SF1">
    <property type="entry name" value="SEPTUM SITE-DETERMINING PROTEIN MINC"/>
    <property type="match status" value="1"/>
</dbReference>
<dbReference type="Pfam" id="PF03775">
    <property type="entry name" value="MinC_C"/>
    <property type="match status" value="1"/>
</dbReference>
<dbReference type="Pfam" id="PF22642">
    <property type="entry name" value="MinC_N_1"/>
    <property type="match status" value="1"/>
</dbReference>
<dbReference type="SUPFAM" id="SSF63848">
    <property type="entry name" value="Cell-division inhibitor MinC, C-terminal domain"/>
    <property type="match status" value="1"/>
</dbReference>
<proteinExistence type="inferred from homology"/>
<name>MINC_BACC0</name>
<reference key="1">
    <citation type="submission" date="2008-10" db="EMBL/GenBank/DDBJ databases">
        <title>Genome sequence of Bacillus cereus AH820.</title>
        <authorList>
            <person name="Dodson R.J."/>
            <person name="Durkin A.S."/>
            <person name="Rosovitz M.J."/>
            <person name="Rasko D.A."/>
            <person name="Hoffmaster A."/>
            <person name="Ravel J."/>
            <person name="Sutton G."/>
        </authorList>
    </citation>
    <scope>NUCLEOTIDE SEQUENCE [LARGE SCALE GENOMIC DNA]</scope>
    <source>
        <strain>AH820</strain>
    </source>
</reference>
<sequence>MEEKKQQNVTIKGTKDGITLHLDDCCSFSELLKELDEKLSTHYYDGDGRSLIEVHVKVGNRYLTEVQQEEIRTLIRNKKNLVVDSIESDVITKEEAIAWKEETEIVPISKIVRSGQVLHVKGNLLLIGDVNPGGTVIAGGNIFVVGSLRGIAHAGYYGDSDAVIAASVMNPMQLRISDVAMRAPEEKEDGAEAAECAYINENNHIVVDRLQLLTHLRPNLTKLERGIV</sequence>
<gene>
    <name evidence="1" type="primary">minC</name>
    <name type="ordered locus">BCAH820_4529</name>
</gene>
<organism>
    <name type="scientific">Bacillus cereus (strain AH820)</name>
    <dbReference type="NCBI Taxonomy" id="405535"/>
    <lineage>
        <taxon>Bacteria</taxon>
        <taxon>Bacillati</taxon>
        <taxon>Bacillota</taxon>
        <taxon>Bacilli</taxon>
        <taxon>Bacillales</taxon>
        <taxon>Bacillaceae</taxon>
        <taxon>Bacillus</taxon>
        <taxon>Bacillus cereus group</taxon>
    </lineage>
</organism>
<keyword id="KW-0131">Cell cycle</keyword>
<keyword id="KW-0132">Cell division</keyword>
<keyword id="KW-0717">Septation</keyword>
<accession>B7JQ35</accession>
<comment type="function">
    <text evidence="1">Cell division inhibitor that blocks the formation of polar Z ring septums. Rapidly oscillates between the poles of the cell to destabilize FtsZ filaments that have formed before they mature into polar Z rings. Prevents FtsZ polymerization.</text>
</comment>
<comment type="subunit">
    <text evidence="1">Interacts with MinD and FtsZ.</text>
</comment>
<comment type="similarity">
    <text evidence="1">Belongs to the MinC family.</text>
</comment>